<feature type="signal peptide" evidence="2">
    <location>
        <begin position="1"/>
        <end position="20"/>
    </location>
</feature>
<feature type="chain" id="PRO_5013987701" description="Unclassified hydrophobin 8">
    <location>
        <begin position="21"/>
        <end position="125"/>
    </location>
</feature>
<feature type="disulfide bond" evidence="1">
    <location>
        <begin position="31"/>
        <end position="105"/>
    </location>
</feature>
<feature type="disulfide bond" evidence="1">
    <location>
        <begin position="38"/>
        <end position="99"/>
    </location>
</feature>
<feature type="disulfide bond" evidence="1">
    <location>
        <begin position="39"/>
        <end position="90"/>
    </location>
</feature>
<feature type="disulfide bond" evidence="1">
    <location>
        <begin position="106"/>
        <end position="119"/>
    </location>
</feature>
<evidence type="ECO:0000250" key="1">
    <source>
        <dbReference type="UniProtKB" id="Q04571"/>
    </source>
</evidence>
<evidence type="ECO:0000255" key="2"/>
<evidence type="ECO:0000269" key="3">
    <source>
    </source>
</evidence>
<evidence type="ECO:0000303" key="4">
    <source>
    </source>
</evidence>
<evidence type="ECO:0000305" key="5"/>
<evidence type="ECO:0000305" key="6">
    <source>
    </source>
</evidence>
<organism>
    <name type="scientific">Pleurotus ostreatus (strain PC15)</name>
    <name type="common">Oyster mushroom</name>
    <dbReference type="NCBI Taxonomy" id="1137138"/>
    <lineage>
        <taxon>Eukaryota</taxon>
        <taxon>Fungi</taxon>
        <taxon>Dikarya</taxon>
        <taxon>Basidiomycota</taxon>
        <taxon>Agaricomycotina</taxon>
        <taxon>Agaricomycetes</taxon>
        <taxon>Agaricomycetidae</taxon>
        <taxon>Agaricales</taxon>
        <taxon>Pleurotineae</taxon>
        <taxon>Pleurotaceae</taxon>
        <taxon>Pleurotus</taxon>
    </lineage>
</organism>
<name>HYD8_PLEO1</name>
<gene>
    <name evidence="4" type="primary">Hydph8</name>
    <name type="ORF">PLEOSDRAFT_163835</name>
</gene>
<protein>
    <recommendedName>
        <fullName evidence="4">Unclassified hydrophobin 8</fullName>
    </recommendedName>
</protein>
<proteinExistence type="evidence at transcript level"/>
<comment type="function">
    <text evidence="3 5">Aerial growth, conidiation, and dispersal of filamentous fungi in the environment rely upon a capability of their secreting small amphipathic proteins called hydrophobins (HPBs) with low sequence identity. Class I can self-assemble into an outermost layer of rodlet bundles on aerial cell surfaces, conferring cellular hydrophobicity that supports fungal growth, development and dispersal; whereas Class II form highly ordered films at water-air interfaces through intermolecular interactions but contribute nothing to the rodlet structure (Probable). Hydph8 is an unclassified hydrophobin involved in mycelial growth (PubMed:33636611).</text>
</comment>
<comment type="subunit">
    <text evidence="1">Self-assembles to form functional amyloid fibrils called rodlets. Self-assembly into fibrillar rodlets occurs spontaneously at hydrophobic:hydrophilic interfaces and the rodlets further associate laterally to form amphipathic monolayers.</text>
</comment>
<comment type="subcellular location">
    <subcellularLocation>
        <location evidence="6">Secreted</location>
    </subcellularLocation>
    <subcellularLocation>
        <location evidence="6">Secreted</location>
        <location evidence="6">Cell wall</location>
    </subcellularLocation>
</comment>
<comment type="developmental stage">
    <text evidence="3">Specifically expressed in monokaryotic mycelia.</text>
</comment>
<comment type="similarity">
    <text evidence="5">Belongs to the fungal hydrophobin family.</text>
</comment>
<keyword id="KW-0134">Cell wall</keyword>
<keyword id="KW-1015">Disulfide bond</keyword>
<keyword id="KW-1185">Reference proteome</keyword>
<keyword id="KW-0964">Secreted</keyword>
<keyword id="KW-0732">Signal</keyword>
<accession>A0A067NFU6</accession>
<sequence length="125" mass="12583">MMFSKPVVLATTALATFAAATPLVARTEPTCSSTEIKCCENVGTAAVVSSVLTPILVSIPLVGPLLSLLGLNAVVALLFGTVDVVLGLTCSGIDVGGSCNAQTVCCENVQFNGLINVGCVAIDIL</sequence>
<dbReference type="EMBL" id="KL198014">
    <property type="protein sequence ID" value="KDQ22992.1"/>
    <property type="molecule type" value="Genomic_DNA"/>
</dbReference>
<dbReference type="STRING" id="1137138.A0A067NFU6"/>
<dbReference type="VEuPathDB" id="FungiDB:PLEOSDRAFT_163835"/>
<dbReference type="HOGENOM" id="CLU_105134_2_0_1"/>
<dbReference type="InParanoid" id="A0A067NFU6"/>
<dbReference type="OrthoDB" id="138913at5338"/>
<dbReference type="Proteomes" id="UP000027073">
    <property type="component" value="Unassembled WGS sequence"/>
</dbReference>
<dbReference type="GO" id="GO:0005576">
    <property type="term" value="C:extracellular region"/>
    <property type="evidence" value="ECO:0007669"/>
    <property type="project" value="UniProtKB-KW"/>
</dbReference>
<dbReference type="GO" id="GO:0009277">
    <property type="term" value="C:fungal-type cell wall"/>
    <property type="evidence" value="ECO:0007669"/>
    <property type="project" value="InterPro"/>
</dbReference>
<dbReference type="GO" id="GO:0005199">
    <property type="term" value="F:structural constituent of cell wall"/>
    <property type="evidence" value="ECO:0007669"/>
    <property type="project" value="InterPro"/>
</dbReference>
<dbReference type="CDD" id="cd23507">
    <property type="entry name" value="hydrophobin_I"/>
    <property type="match status" value="1"/>
</dbReference>
<dbReference type="InterPro" id="IPR001338">
    <property type="entry name" value="Hydrophobin"/>
</dbReference>
<dbReference type="Pfam" id="PF01185">
    <property type="entry name" value="Hydrophobin"/>
    <property type="match status" value="1"/>
</dbReference>
<dbReference type="SMART" id="SM00075">
    <property type="entry name" value="HYDRO"/>
    <property type="match status" value="1"/>
</dbReference>
<reference key="1">
    <citation type="journal article" date="2014" name="Proc. Natl. Acad. Sci. U.S.A.">
        <title>Extensive sampling of basidiomycete genomes demonstrates inadequacy of the white-rot/brown-rot paradigm for wood decay fungi.</title>
        <authorList>
            <person name="Riley R."/>
            <person name="Salamov A.A."/>
            <person name="Brown D.W."/>
            <person name="Nagy L.G."/>
            <person name="Floudas D."/>
            <person name="Held B.W."/>
            <person name="Levasseur A."/>
            <person name="Lombard V."/>
            <person name="Morin E."/>
            <person name="Otillar R."/>
            <person name="Lindquist E.A."/>
            <person name="Sun H."/>
            <person name="LaButti K.M."/>
            <person name="Schmutz J."/>
            <person name="Jabbour D."/>
            <person name="Luo H."/>
            <person name="Baker S.E."/>
            <person name="Pisabarro A.G."/>
            <person name="Walton J.D."/>
            <person name="Blanchette R.A."/>
            <person name="Henrissat B."/>
            <person name="Martin F."/>
            <person name="Cullen D."/>
            <person name="Hibbett D.S."/>
            <person name="Grigoriev I.V."/>
        </authorList>
    </citation>
    <scope>NUCLEOTIDE SEQUENCE [LARGE SCALE GENOMIC DNA]</scope>
    <source>
        <strain>PC15</strain>
    </source>
</reference>
<reference key="2">
    <citation type="journal article" date="2021" name="Microbiol. Res.">
        <title>Identification of hydrophobin genes and their physiological functions related to growth and development in Pleurotus ostreatus.</title>
        <authorList>
            <person name="Xu D."/>
            <person name="Wang Y."/>
            <person name="Keerio A.A."/>
            <person name="Ma A."/>
        </authorList>
    </citation>
    <scope>IDENTIFICATION</scope>
    <scope>FUNCTION</scope>
    <scope>DEVELOPMENTAL STAGE</scope>
</reference>